<keyword id="KW-0067">ATP-binding</keyword>
<keyword id="KW-0963">Cytoplasm</keyword>
<keyword id="KW-0235">DNA replication</keyword>
<keyword id="KW-0238">DNA-binding</keyword>
<keyword id="KW-0446">Lipid-binding</keyword>
<keyword id="KW-0547">Nucleotide-binding</keyword>
<keyword id="KW-1185">Reference proteome</keyword>
<organism>
    <name type="scientific">Caulobacter vibrioides (strain ATCC 19089 / CIP 103742 / CB 15)</name>
    <name type="common">Caulobacter crescentus</name>
    <dbReference type="NCBI Taxonomy" id="190650"/>
    <lineage>
        <taxon>Bacteria</taxon>
        <taxon>Pseudomonadati</taxon>
        <taxon>Pseudomonadota</taxon>
        <taxon>Alphaproteobacteria</taxon>
        <taxon>Caulobacterales</taxon>
        <taxon>Caulobacteraceae</taxon>
        <taxon>Caulobacter</taxon>
    </lineage>
</organism>
<accession>P0CAU4</accession>
<accession>P35887</accession>
<name>DNAA_CAUVC</name>
<sequence length="490" mass="53884">MTMKGGVASQDFSAAIATACEPAANVWSKVCVALKRELGDAAFGSWIAPAMLREAATGDVVLVTSTGIARDWIRRSAWRRIGELWAAHDATGRRIDLKSRLEFEAAAGAYVEATPKAVAAEPIEIVLPVSTDAPTVVAPSAKSPRTQGLQERFTFETFVPGPANEFAHAVARRIANWADGHFNPVLFHGPYGFGKTHLLNALAWEAMRNAPEKRVVYLTAERFLSTFVRAVMDRQTAAFKEELRAADLLIIDDVHFIAGKQSTQEELFHTLTALVGEGGRVVFSADRPPSAMTEMDAHLRSHLSAGLVCGLEPADRNLRLGILERKIQTLGAAHGFEPSIRPEVMQFLADRFTDSVRELEGALNTLSARAGEGLSRMTLDEVQAILRPHLRSGEKRITIDDIQKATAEHYGMKQADLLSERRNRAVARPRQAAMWLAKQLTTRSLPDIGRRFGGRDHTTVLHAVRRIEALRAEDSALSHDLETLTRKLRG</sequence>
<dbReference type="EMBL" id="AE005673">
    <property type="protein sequence ID" value="AAK21996.1"/>
    <property type="molecule type" value="Genomic_DNA"/>
</dbReference>
<dbReference type="PIR" id="H87249">
    <property type="entry name" value="H87249"/>
</dbReference>
<dbReference type="RefSeq" id="NP_418828.1">
    <property type="nucleotide sequence ID" value="NC_002696.2"/>
</dbReference>
<dbReference type="RefSeq" id="WP_010917898.1">
    <property type="nucleotide sequence ID" value="NC_002696.2"/>
</dbReference>
<dbReference type="SMR" id="P0CAU4"/>
<dbReference type="STRING" id="190650.CC_0008"/>
<dbReference type="EnsemblBacteria" id="AAK21996">
    <property type="protein sequence ID" value="AAK21996"/>
    <property type="gene ID" value="CC_0008"/>
</dbReference>
<dbReference type="KEGG" id="ccr:CC_0008"/>
<dbReference type="PATRIC" id="fig|190650.5.peg.8"/>
<dbReference type="eggNOG" id="COG0593">
    <property type="taxonomic scope" value="Bacteria"/>
</dbReference>
<dbReference type="HOGENOM" id="CLU_026910_3_0_5"/>
<dbReference type="BioCyc" id="CAULO:CC0008-MONOMER"/>
<dbReference type="Proteomes" id="UP000001816">
    <property type="component" value="Chromosome"/>
</dbReference>
<dbReference type="GO" id="GO:0005737">
    <property type="term" value="C:cytoplasm"/>
    <property type="evidence" value="ECO:0007669"/>
    <property type="project" value="UniProtKB-SubCell"/>
</dbReference>
<dbReference type="GO" id="GO:0005886">
    <property type="term" value="C:plasma membrane"/>
    <property type="evidence" value="ECO:0007669"/>
    <property type="project" value="TreeGrafter"/>
</dbReference>
<dbReference type="GO" id="GO:0005524">
    <property type="term" value="F:ATP binding"/>
    <property type="evidence" value="ECO:0007669"/>
    <property type="project" value="UniProtKB-UniRule"/>
</dbReference>
<dbReference type="GO" id="GO:0016887">
    <property type="term" value="F:ATP hydrolysis activity"/>
    <property type="evidence" value="ECO:0007669"/>
    <property type="project" value="InterPro"/>
</dbReference>
<dbReference type="GO" id="GO:0003688">
    <property type="term" value="F:DNA replication origin binding"/>
    <property type="evidence" value="ECO:0007669"/>
    <property type="project" value="UniProtKB-UniRule"/>
</dbReference>
<dbReference type="GO" id="GO:0008289">
    <property type="term" value="F:lipid binding"/>
    <property type="evidence" value="ECO:0007669"/>
    <property type="project" value="UniProtKB-KW"/>
</dbReference>
<dbReference type="GO" id="GO:0006270">
    <property type="term" value="P:DNA replication initiation"/>
    <property type="evidence" value="ECO:0007669"/>
    <property type="project" value="UniProtKB-UniRule"/>
</dbReference>
<dbReference type="GO" id="GO:0006275">
    <property type="term" value="P:regulation of DNA replication"/>
    <property type="evidence" value="ECO:0007669"/>
    <property type="project" value="UniProtKB-UniRule"/>
</dbReference>
<dbReference type="CDD" id="cd00009">
    <property type="entry name" value="AAA"/>
    <property type="match status" value="1"/>
</dbReference>
<dbReference type="CDD" id="cd06571">
    <property type="entry name" value="Bac_DnaA_C"/>
    <property type="match status" value="1"/>
</dbReference>
<dbReference type="Gene3D" id="1.10.1750.10">
    <property type="match status" value="1"/>
</dbReference>
<dbReference type="Gene3D" id="1.10.8.60">
    <property type="match status" value="1"/>
</dbReference>
<dbReference type="Gene3D" id="3.30.300.180">
    <property type="match status" value="1"/>
</dbReference>
<dbReference type="Gene3D" id="3.40.50.300">
    <property type="entry name" value="P-loop containing nucleotide triphosphate hydrolases"/>
    <property type="match status" value="1"/>
</dbReference>
<dbReference type="HAMAP" id="MF_00377">
    <property type="entry name" value="DnaA_bact"/>
    <property type="match status" value="1"/>
</dbReference>
<dbReference type="InterPro" id="IPR003593">
    <property type="entry name" value="AAA+_ATPase"/>
</dbReference>
<dbReference type="InterPro" id="IPR001957">
    <property type="entry name" value="Chromosome_initiator_DnaA"/>
</dbReference>
<dbReference type="InterPro" id="IPR020591">
    <property type="entry name" value="Chromosome_initiator_DnaA-like"/>
</dbReference>
<dbReference type="InterPro" id="IPR018312">
    <property type="entry name" value="Chromosome_initiator_DnaA_CS"/>
</dbReference>
<dbReference type="InterPro" id="IPR013159">
    <property type="entry name" value="DnaA_C"/>
</dbReference>
<dbReference type="InterPro" id="IPR013317">
    <property type="entry name" value="DnaA_dom"/>
</dbReference>
<dbReference type="InterPro" id="IPR024633">
    <property type="entry name" value="DnaA_N_dom"/>
</dbReference>
<dbReference type="InterPro" id="IPR038454">
    <property type="entry name" value="DnaA_N_sf"/>
</dbReference>
<dbReference type="InterPro" id="IPR027417">
    <property type="entry name" value="P-loop_NTPase"/>
</dbReference>
<dbReference type="InterPro" id="IPR010921">
    <property type="entry name" value="Trp_repressor/repl_initiator"/>
</dbReference>
<dbReference type="NCBIfam" id="TIGR00362">
    <property type="entry name" value="DnaA"/>
    <property type="match status" value="1"/>
</dbReference>
<dbReference type="PANTHER" id="PTHR30050">
    <property type="entry name" value="CHROMOSOMAL REPLICATION INITIATOR PROTEIN DNAA"/>
    <property type="match status" value="1"/>
</dbReference>
<dbReference type="PANTHER" id="PTHR30050:SF2">
    <property type="entry name" value="CHROMOSOMAL REPLICATION INITIATOR PROTEIN DNAA"/>
    <property type="match status" value="1"/>
</dbReference>
<dbReference type="Pfam" id="PF00308">
    <property type="entry name" value="Bac_DnaA"/>
    <property type="match status" value="1"/>
</dbReference>
<dbReference type="Pfam" id="PF08299">
    <property type="entry name" value="Bac_DnaA_C"/>
    <property type="match status" value="1"/>
</dbReference>
<dbReference type="Pfam" id="PF11638">
    <property type="entry name" value="DnaA_N"/>
    <property type="match status" value="1"/>
</dbReference>
<dbReference type="PRINTS" id="PR00051">
    <property type="entry name" value="DNAA"/>
</dbReference>
<dbReference type="SMART" id="SM00382">
    <property type="entry name" value="AAA"/>
    <property type="match status" value="1"/>
</dbReference>
<dbReference type="SMART" id="SM00760">
    <property type="entry name" value="Bac_DnaA_C"/>
    <property type="match status" value="1"/>
</dbReference>
<dbReference type="SUPFAM" id="SSF52540">
    <property type="entry name" value="P-loop containing nucleoside triphosphate hydrolases"/>
    <property type="match status" value="1"/>
</dbReference>
<dbReference type="SUPFAM" id="SSF48295">
    <property type="entry name" value="TrpR-like"/>
    <property type="match status" value="1"/>
</dbReference>
<dbReference type="PROSITE" id="PS01008">
    <property type="entry name" value="DNAA"/>
    <property type="match status" value="1"/>
</dbReference>
<proteinExistence type="inferred from homology"/>
<reference key="1">
    <citation type="journal article" date="2001" name="Proc. Natl. Acad. Sci. U.S.A.">
        <title>Complete genome sequence of Caulobacter crescentus.</title>
        <authorList>
            <person name="Nierman W.C."/>
            <person name="Feldblyum T.V."/>
            <person name="Laub M.T."/>
            <person name="Paulsen I.T."/>
            <person name="Nelson K.E."/>
            <person name="Eisen J.A."/>
            <person name="Heidelberg J.F."/>
            <person name="Alley M.R.K."/>
            <person name="Ohta N."/>
            <person name="Maddock J.R."/>
            <person name="Potocka I."/>
            <person name="Nelson W.C."/>
            <person name="Newton A."/>
            <person name="Stephens C."/>
            <person name="Phadke N.D."/>
            <person name="Ely B."/>
            <person name="DeBoy R.T."/>
            <person name="Dodson R.J."/>
            <person name="Durkin A.S."/>
            <person name="Gwinn M.L."/>
            <person name="Haft D.H."/>
            <person name="Kolonay J.F."/>
            <person name="Smit J."/>
            <person name="Craven M.B."/>
            <person name="Khouri H.M."/>
            <person name="Shetty J."/>
            <person name="Berry K.J."/>
            <person name="Utterback T.R."/>
            <person name="Tran K."/>
            <person name="Wolf A.M."/>
            <person name="Vamathevan J.J."/>
            <person name="Ermolaeva M.D."/>
            <person name="White O."/>
            <person name="Salzberg S.L."/>
            <person name="Venter J.C."/>
            <person name="Shapiro L."/>
            <person name="Fraser C.M."/>
        </authorList>
    </citation>
    <scope>NUCLEOTIDE SEQUENCE [LARGE SCALE GENOMIC DNA]</scope>
    <source>
        <strain>ATCC 19089 / CIP 103742 / CB 15</strain>
    </source>
</reference>
<feature type="chain" id="PRO_0000114154" description="Chromosomal replication initiator protein DnaA">
    <location>
        <begin position="1"/>
        <end position="490"/>
    </location>
</feature>
<feature type="region of interest" description="Domain I, interacts with DnaA modulators" evidence="1">
    <location>
        <begin position="1"/>
        <end position="91"/>
    </location>
</feature>
<feature type="region of interest" description="Domain II" evidence="1">
    <location>
        <begin position="91"/>
        <end position="147"/>
    </location>
</feature>
<feature type="region of interest" description="Domain III, AAA+ region" evidence="1">
    <location>
        <begin position="148"/>
        <end position="370"/>
    </location>
</feature>
<feature type="region of interest" description="Domain IV, binds dsDNA" evidence="1">
    <location>
        <begin position="371"/>
        <end position="490"/>
    </location>
</feature>
<feature type="binding site" evidence="1">
    <location>
        <position position="192"/>
    </location>
    <ligand>
        <name>ATP</name>
        <dbReference type="ChEBI" id="CHEBI:30616"/>
    </ligand>
</feature>
<feature type="binding site" evidence="1">
    <location>
        <position position="194"/>
    </location>
    <ligand>
        <name>ATP</name>
        <dbReference type="ChEBI" id="CHEBI:30616"/>
    </ligand>
</feature>
<feature type="binding site" evidence="1">
    <location>
        <position position="195"/>
    </location>
    <ligand>
        <name>ATP</name>
        <dbReference type="ChEBI" id="CHEBI:30616"/>
    </ligand>
</feature>
<feature type="binding site" evidence="1">
    <location>
        <position position="196"/>
    </location>
    <ligand>
        <name>ATP</name>
        <dbReference type="ChEBI" id="CHEBI:30616"/>
    </ligand>
</feature>
<comment type="function">
    <text evidence="1">Plays an essential role in the initiation and regulation of chromosomal replication. ATP-DnaA binds to the origin of replication (oriC) to initiate formation of the DNA replication initiation complex once per cell cycle. Binds the DnaA box (a 9 base pair repeat at the origin) and separates the double-stranded (ds)DNA. Forms a right-handed helical filament on oriC DNA; dsDNA binds to the exterior of the filament while single-stranded (ss)DNA is stabiized in the filament's interior. The ATP-DnaA-oriC complex binds and stabilizes one strand of the AT-rich DNA unwinding element (DUE), permitting loading of DNA polymerase. After initiation quickly degrades to an ADP-DnaA complex that is not apt for DNA replication. Binds acidic phospholipids.</text>
</comment>
<comment type="subunit">
    <text evidence="1">Oligomerizes as a right-handed, spiral filament on DNA at oriC.</text>
</comment>
<comment type="subcellular location">
    <subcellularLocation>
        <location evidence="1">Cytoplasm</location>
    </subcellularLocation>
</comment>
<comment type="domain">
    <text evidence="1">Domain I is involved in oligomerization and binding regulators, domain II is flexibile and of varying length in different bacteria, domain III forms the AAA+ region, while domain IV binds dsDNA.</text>
</comment>
<comment type="similarity">
    <text evidence="1">Belongs to the DnaA family.</text>
</comment>
<gene>
    <name evidence="1" type="primary">dnaA</name>
    <name type="ordered locus">CC_0008</name>
</gene>
<evidence type="ECO:0000255" key="1">
    <source>
        <dbReference type="HAMAP-Rule" id="MF_00377"/>
    </source>
</evidence>
<protein>
    <recommendedName>
        <fullName evidence="1">Chromosomal replication initiator protein DnaA</fullName>
    </recommendedName>
</protein>